<dbReference type="EMBL" id="AJ938182">
    <property type="protein sequence ID" value="CAI82244.1"/>
    <property type="molecule type" value="Genomic_DNA"/>
</dbReference>
<dbReference type="RefSeq" id="WP_001065583.1">
    <property type="nucleotide sequence ID" value="NC_007622.1"/>
</dbReference>
<dbReference type="SMR" id="Q2YZB2"/>
<dbReference type="KEGG" id="sab:SAB2556c"/>
<dbReference type="HOGENOM" id="CLU_089652_0_0_9"/>
<dbReference type="UniPathway" id="UPA00031">
    <property type="reaction ID" value="UER00006"/>
</dbReference>
<dbReference type="GO" id="GO:0005737">
    <property type="term" value="C:cytoplasm"/>
    <property type="evidence" value="ECO:0007669"/>
    <property type="project" value="UniProtKB-SubCell"/>
</dbReference>
<dbReference type="GO" id="GO:0140096">
    <property type="term" value="F:catalytic activity, acting on a protein"/>
    <property type="evidence" value="ECO:0007669"/>
    <property type="project" value="UniProtKB-ARBA"/>
</dbReference>
<dbReference type="GO" id="GO:0016740">
    <property type="term" value="F:transferase activity"/>
    <property type="evidence" value="ECO:0007669"/>
    <property type="project" value="UniProtKB-ARBA"/>
</dbReference>
<dbReference type="GO" id="GO:0000105">
    <property type="term" value="P:L-histidine biosynthetic process"/>
    <property type="evidence" value="ECO:0007669"/>
    <property type="project" value="UniProtKB-UniRule"/>
</dbReference>
<dbReference type="Gene3D" id="3.30.930.10">
    <property type="entry name" value="Bira Bifunctional Protein, Domain 2"/>
    <property type="match status" value="1"/>
</dbReference>
<dbReference type="HAMAP" id="MF_00125">
    <property type="entry name" value="HisZ"/>
    <property type="match status" value="1"/>
</dbReference>
<dbReference type="InterPro" id="IPR045864">
    <property type="entry name" value="aa-tRNA-synth_II/BPL/LPL"/>
</dbReference>
<dbReference type="InterPro" id="IPR041715">
    <property type="entry name" value="HisRS-like_core"/>
</dbReference>
<dbReference type="InterPro" id="IPR004517">
    <property type="entry name" value="HisZ"/>
</dbReference>
<dbReference type="NCBIfam" id="NF008947">
    <property type="entry name" value="PRK12294.1"/>
    <property type="match status" value="1"/>
</dbReference>
<dbReference type="Pfam" id="PF13393">
    <property type="entry name" value="tRNA-synt_His"/>
    <property type="match status" value="1"/>
</dbReference>
<dbReference type="SUPFAM" id="SSF55681">
    <property type="entry name" value="Class II aaRS and biotin synthetases"/>
    <property type="match status" value="1"/>
</dbReference>
<sequence>MNNSEQLIALKESETAFLKYFNKADYELVDFSVVEKLDWKQLNHEDLQQMGERNFWQHEHQIYAIRNDFTDQLLRYYSMYPTAATKVAYTGLIIRNNEAAVQVGLENYAPSLANVQQSLKLFIQFIQQQLRDNVYFVVLGHYQLLDALLDKSLQTPDILSMIEERNLSGLVTYLSTEHPIVQILKENTQQQLNVLEHYIPNDHPALVELKIWERWLHTQGYKDIHLDITAQPPRSYYTGLFIQCHFAENESRVLTGGYYKGSIEGFGLGLTL</sequence>
<name>HISZ_STAAB</name>
<reference key="1">
    <citation type="journal article" date="2007" name="PLoS ONE">
        <title>Molecular correlates of host specialization in Staphylococcus aureus.</title>
        <authorList>
            <person name="Herron-Olson L."/>
            <person name="Fitzgerald J.R."/>
            <person name="Musser J.M."/>
            <person name="Kapur V."/>
        </authorList>
    </citation>
    <scope>NUCLEOTIDE SEQUENCE [LARGE SCALE GENOMIC DNA]</scope>
    <source>
        <strain>bovine RF122 / ET3-1</strain>
    </source>
</reference>
<comment type="function">
    <text evidence="1">Required for the first step of histidine biosynthesis. May allow the feedback regulation of ATP phosphoribosyltransferase activity by histidine.</text>
</comment>
<comment type="pathway">
    <text evidence="1">Amino-acid biosynthesis; L-histidine biosynthesis; L-histidine from 5-phospho-alpha-D-ribose 1-diphosphate: step 1/9.</text>
</comment>
<comment type="subunit">
    <text evidence="1">Heteromultimer composed of HisG and HisZ subunits.</text>
</comment>
<comment type="subcellular location">
    <subcellularLocation>
        <location evidence="1">Cytoplasm</location>
    </subcellularLocation>
</comment>
<comment type="miscellaneous">
    <text>This function is generally fulfilled by the C-terminal part of HisG, which is missing in some bacteria such as this one.</text>
</comment>
<comment type="similarity">
    <text evidence="1">Belongs to the class-II aminoacyl-tRNA synthetase family. HisZ subfamily.</text>
</comment>
<gene>
    <name evidence="1" type="primary">hisZ</name>
    <name type="ordered locus">SAB2556c</name>
</gene>
<keyword id="KW-0028">Amino-acid biosynthesis</keyword>
<keyword id="KW-0963">Cytoplasm</keyword>
<keyword id="KW-0368">Histidine biosynthesis</keyword>
<protein>
    <recommendedName>
        <fullName evidence="1">ATP phosphoribosyltransferase regulatory subunit</fullName>
    </recommendedName>
</protein>
<feature type="chain" id="PRO_0000242858" description="ATP phosphoribosyltransferase regulatory subunit">
    <location>
        <begin position="1"/>
        <end position="272"/>
    </location>
</feature>
<organism>
    <name type="scientific">Staphylococcus aureus (strain bovine RF122 / ET3-1)</name>
    <dbReference type="NCBI Taxonomy" id="273036"/>
    <lineage>
        <taxon>Bacteria</taxon>
        <taxon>Bacillati</taxon>
        <taxon>Bacillota</taxon>
        <taxon>Bacilli</taxon>
        <taxon>Bacillales</taxon>
        <taxon>Staphylococcaceae</taxon>
        <taxon>Staphylococcus</taxon>
    </lineage>
</organism>
<proteinExistence type="inferred from homology"/>
<accession>Q2YZB2</accession>
<evidence type="ECO:0000255" key="1">
    <source>
        <dbReference type="HAMAP-Rule" id="MF_00125"/>
    </source>
</evidence>